<protein>
    <recommendedName>
        <fullName evidence="1">Large ribosomal subunit protein uL14</fullName>
    </recommendedName>
    <alternativeName>
        <fullName evidence="2">50S ribosomal protein L14</fullName>
    </alternativeName>
</protein>
<keyword id="KW-0687">Ribonucleoprotein</keyword>
<keyword id="KW-0689">Ribosomal protein</keyword>
<keyword id="KW-0694">RNA-binding</keyword>
<keyword id="KW-0699">rRNA-binding</keyword>
<proteinExistence type="inferred from homology"/>
<feature type="chain" id="PRO_1000144205" description="Large ribosomal subunit protein uL14">
    <location>
        <begin position="1"/>
        <end position="122"/>
    </location>
</feature>
<organism>
    <name type="scientific">Acinetobacter baumannii (strain AB307-0294)</name>
    <dbReference type="NCBI Taxonomy" id="557600"/>
    <lineage>
        <taxon>Bacteria</taxon>
        <taxon>Pseudomonadati</taxon>
        <taxon>Pseudomonadota</taxon>
        <taxon>Gammaproteobacteria</taxon>
        <taxon>Moraxellales</taxon>
        <taxon>Moraxellaceae</taxon>
        <taxon>Acinetobacter</taxon>
        <taxon>Acinetobacter calcoaceticus/baumannii complex</taxon>
    </lineage>
</organism>
<comment type="function">
    <text evidence="1">Binds to 23S rRNA. Forms part of two intersubunit bridges in the 70S ribosome.</text>
</comment>
<comment type="subunit">
    <text evidence="1">Part of the 50S ribosomal subunit. Forms a cluster with proteins L3 and L19. In the 70S ribosome, L14 and L19 interact and together make contacts with the 16S rRNA in bridges B5 and B8.</text>
</comment>
<comment type="similarity">
    <text evidence="1">Belongs to the universal ribosomal protein uL14 family.</text>
</comment>
<gene>
    <name evidence="1" type="primary">rplN</name>
    <name type="ordered locus">ABBFA_000442</name>
</gene>
<accession>B7GW12</accession>
<sequence length="122" mass="13502">MIQTETMLDVADNSGARRVQCIKVLGGSHRRYASVGDIIKVTVKEAIPRARVKKGDVMNAVVVRTKFGIRRPDGSVIRFDDNAAVILNNNKAPIATRIFGPVTRELRTEQFMKIISLAPEVL</sequence>
<evidence type="ECO:0000255" key="1">
    <source>
        <dbReference type="HAMAP-Rule" id="MF_01367"/>
    </source>
</evidence>
<evidence type="ECO:0000305" key="2"/>
<name>RL14_ACIB3</name>
<reference key="1">
    <citation type="journal article" date="2008" name="J. Bacteriol.">
        <title>Comparative genome sequence analysis of multidrug-resistant Acinetobacter baumannii.</title>
        <authorList>
            <person name="Adams M.D."/>
            <person name="Goglin K."/>
            <person name="Molyneaux N."/>
            <person name="Hujer K.M."/>
            <person name="Lavender H."/>
            <person name="Jamison J.J."/>
            <person name="MacDonald I.J."/>
            <person name="Martin K.M."/>
            <person name="Russo T."/>
            <person name="Campagnari A.A."/>
            <person name="Hujer A.M."/>
            <person name="Bonomo R.A."/>
            <person name="Gill S.R."/>
        </authorList>
    </citation>
    <scope>NUCLEOTIDE SEQUENCE [LARGE SCALE GENOMIC DNA]</scope>
    <source>
        <strain>AB307-0294</strain>
    </source>
</reference>
<dbReference type="EMBL" id="CP001172">
    <property type="protein sequence ID" value="ACJ57833.1"/>
    <property type="molecule type" value="Genomic_DNA"/>
</dbReference>
<dbReference type="RefSeq" id="WP_001982634.1">
    <property type="nucleotide sequence ID" value="NZ_CP001172.1"/>
</dbReference>
<dbReference type="SMR" id="B7GW12"/>
<dbReference type="GeneID" id="97425209"/>
<dbReference type="HOGENOM" id="CLU_095071_2_1_6"/>
<dbReference type="Proteomes" id="UP000006924">
    <property type="component" value="Chromosome"/>
</dbReference>
<dbReference type="GO" id="GO:0022625">
    <property type="term" value="C:cytosolic large ribosomal subunit"/>
    <property type="evidence" value="ECO:0007669"/>
    <property type="project" value="TreeGrafter"/>
</dbReference>
<dbReference type="GO" id="GO:0070180">
    <property type="term" value="F:large ribosomal subunit rRNA binding"/>
    <property type="evidence" value="ECO:0007669"/>
    <property type="project" value="TreeGrafter"/>
</dbReference>
<dbReference type="GO" id="GO:0003735">
    <property type="term" value="F:structural constituent of ribosome"/>
    <property type="evidence" value="ECO:0007669"/>
    <property type="project" value="InterPro"/>
</dbReference>
<dbReference type="GO" id="GO:0006412">
    <property type="term" value="P:translation"/>
    <property type="evidence" value="ECO:0007669"/>
    <property type="project" value="UniProtKB-UniRule"/>
</dbReference>
<dbReference type="CDD" id="cd00337">
    <property type="entry name" value="Ribosomal_uL14"/>
    <property type="match status" value="1"/>
</dbReference>
<dbReference type="FunFam" id="2.40.150.20:FF:000001">
    <property type="entry name" value="50S ribosomal protein L14"/>
    <property type="match status" value="1"/>
</dbReference>
<dbReference type="Gene3D" id="2.40.150.20">
    <property type="entry name" value="Ribosomal protein L14"/>
    <property type="match status" value="1"/>
</dbReference>
<dbReference type="HAMAP" id="MF_01367">
    <property type="entry name" value="Ribosomal_uL14"/>
    <property type="match status" value="1"/>
</dbReference>
<dbReference type="InterPro" id="IPR000218">
    <property type="entry name" value="Ribosomal_uL14"/>
</dbReference>
<dbReference type="InterPro" id="IPR005745">
    <property type="entry name" value="Ribosomal_uL14_bac-type"/>
</dbReference>
<dbReference type="InterPro" id="IPR019972">
    <property type="entry name" value="Ribosomal_uL14_CS"/>
</dbReference>
<dbReference type="InterPro" id="IPR036853">
    <property type="entry name" value="Ribosomal_uL14_sf"/>
</dbReference>
<dbReference type="NCBIfam" id="TIGR01067">
    <property type="entry name" value="rplN_bact"/>
    <property type="match status" value="1"/>
</dbReference>
<dbReference type="PANTHER" id="PTHR11761">
    <property type="entry name" value="50S/60S RIBOSOMAL PROTEIN L14/L23"/>
    <property type="match status" value="1"/>
</dbReference>
<dbReference type="PANTHER" id="PTHR11761:SF3">
    <property type="entry name" value="LARGE RIBOSOMAL SUBUNIT PROTEIN UL14M"/>
    <property type="match status" value="1"/>
</dbReference>
<dbReference type="Pfam" id="PF00238">
    <property type="entry name" value="Ribosomal_L14"/>
    <property type="match status" value="1"/>
</dbReference>
<dbReference type="SMART" id="SM01374">
    <property type="entry name" value="Ribosomal_L14"/>
    <property type="match status" value="1"/>
</dbReference>
<dbReference type="SUPFAM" id="SSF50193">
    <property type="entry name" value="Ribosomal protein L14"/>
    <property type="match status" value="1"/>
</dbReference>
<dbReference type="PROSITE" id="PS00049">
    <property type="entry name" value="RIBOSOMAL_L14"/>
    <property type="match status" value="1"/>
</dbReference>